<proteinExistence type="inferred from homology"/>
<accession>A8ZUM8</accession>
<organism>
    <name type="scientific">Desulfosudis oleivorans (strain DSM 6200 / JCM 39069 / Hxd3)</name>
    <name type="common">Desulfococcus oleovorans</name>
    <dbReference type="NCBI Taxonomy" id="96561"/>
    <lineage>
        <taxon>Bacteria</taxon>
        <taxon>Pseudomonadati</taxon>
        <taxon>Thermodesulfobacteriota</taxon>
        <taxon>Desulfobacteria</taxon>
        <taxon>Desulfobacterales</taxon>
        <taxon>Desulfosudaceae</taxon>
        <taxon>Desulfosudis</taxon>
    </lineage>
</organism>
<dbReference type="EMBL" id="CP000859">
    <property type="protein sequence ID" value="ABW66441.1"/>
    <property type="molecule type" value="Genomic_DNA"/>
</dbReference>
<dbReference type="RefSeq" id="WP_012174060.1">
    <property type="nucleotide sequence ID" value="NC_009943.1"/>
</dbReference>
<dbReference type="SMR" id="A8ZUM8"/>
<dbReference type="STRING" id="96561.Dole_0631"/>
<dbReference type="KEGG" id="dol:Dole_0631"/>
<dbReference type="eggNOG" id="COG0636">
    <property type="taxonomic scope" value="Bacteria"/>
</dbReference>
<dbReference type="HOGENOM" id="CLU_148047_2_0_7"/>
<dbReference type="OrthoDB" id="5296711at2"/>
<dbReference type="Proteomes" id="UP000008561">
    <property type="component" value="Chromosome"/>
</dbReference>
<dbReference type="GO" id="GO:0005886">
    <property type="term" value="C:plasma membrane"/>
    <property type="evidence" value="ECO:0007669"/>
    <property type="project" value="UniProtKB-SubCell"/>
</dbReference>
<dbReference type="GO" id="GO:0045259">
    <property type="term" value="C:proton-transporting ATP synthase complex"/>
    <property type="evidence" value="ECO:0007669"/>
    <property type="project" value="UniProtKB-KW"/>
</dbReference>
<dbReference type="GO" id="GO:0033177">
    <property type="term" value="C:proton-transporting two-sector ATPase complex, proton-transporting domain"/>
    <property type="evidence" value="ECO:0007669"/>
    <property type="project" value="InterPro"/>
</dbReference>
<dbReference type="GO" id="GO:0008289">
    <property type="term" value="F:lipid binding"/>
    <property type="evidence" value="ECO:0007669"/>
    <property type="project" value="UniProtKB-KW"/>
</dbReference>
<dbReference type="GO" id="GO:0046933">
    <property type="term" value="F:proton-transporting ATP synthase activity, rotational mechanism"/>
    <property type="evidence" value="ECO:0007669"/>
    <property type="project" value="UniProtKB-UniRule"/>
</dbReference>
<dbReference type="CDD" id="cd18121">
    <property type="entry name" value="ATP-synt_Fo_c"/>
    <property type="match status" value="1"/>
</dbReference>
<dbReference type="Gene3D" id="1.20.120.610">
    <property type="entry name" value="lithium bound rotor ring of v- atpase"/>
    <property type="match status" value="1"/>
</dbReference>
<dbReference type="HAMAP" id="MF_01396">
    <property type="entry name" value="ATP_synth_c_bact"/>
    <property type="match status" value="1"/>
</dbReference>
<dbReference type="InterPro" id="IPR005953">
    <property type="entry name" value="ATP_synth_csu_bac/chlpt"/>
</dbReference>
<dbReference type="InterPro" id="IPR000454">
    <property type="entry name" value="ATP_synth_F0_csu"/>
</dbReference>
<dbReference type="InterPro" id="IPR020537">
    <property type="entry name" value="ATP_synth_F0_csu_DDCD_BS"/>
</dbReference>
<dbReference type="InterPro" id="IPR002379">
    <property type="entry name" value="ATPase_proteolipid_c-like_dom"/>
</dbReference>
<dbReference type="InterPro" id="IPR035921">
    <property type="entry name" value="F/V-ATP_Csub_sf"/>
</dbReference>
<dbReference type="NCBIfam" id="TIGR01260">
    <property type="entry name" value="ATP_synt_c"/>
    <property type="match status" value="1"/>
</dbReference>
<dbReference type="Pfam" id="PF00137">
    <property type="entry name" value="ATP-synt_C"/>
    <property type="match status" value="1"/>
</dbReference>
<dbReference type="PRINTS" id="PR00124">
    <property type="entry name" value="ATPASEC"/>
</dbReference>
<dbReference type="SUPFAM" id="SSF81333">
    <property type="entry name" value="F1F0 ATP synthase subunit C"/>
    <property type="match status" value="1"/>
</dbReference>
<dbReference type="PROSITE" id="PS00605">
    <property type="entry name" value="ATPASE_C"/>
    <property type="match status" value="1"/>
</dbReference>
<feature type="chain" id="PRO_0000365880" description="ATP synthase subunit c">
    <location>
        <begin position="1"/>
        <end position="96"/>
    </location>
</feature>
<feature type="transmembrane region" description="Helical" evidence="1">
    <location>
        <begin position="9"/>
        <end position="29"/>
    </location>
</feature>
<feature type="transmembrane region" description="Helical" evidence="1">
    <location>
        <begin position="58"/>
        <end position="78"/>
    </location>
</feature>
<feature type="site" description="Reversibly protonated during proton transport" evidence="1">
    <location>
        <position position="64"/>
    </location>
</feature>
<comment type="function">
    <text evidence="1">F(1)F(0) ATP synthase produces ATP from ADP in the presence of a proton or sodium gradient. F-type ATPases consist of two structural domains, F(1) containing the extramembraneous catalytic core and F(0) containing the membrane proton channel, linked together by a central stalk and a peripheral stalk. During catalysis, ATP synthesis in the catalytic domain of F(1) is coupled via a rotary mechanism of the central stalk subunits to proton translocation.</text>
</comment>
<comment type="function">
    <text evidence="1">Key component of the F(0) channel; it plays a direct role in translocation across the membrane. A homomeric c-ring of between 10-14 subunits forms the central stalk rotor element with the F(1) delta and epsilon subunits.</text>
</comment>
<comment type="subunit">
    <text evidence="1">F-type ATPases have 2 components, F(1) - the catalytic core - and F(0) - the membrane proton channel. F(1) has five subunits: alpha(3), beta(3), gamma(1), delta(1), epsilon(1). F(0) has three main subunits: a(1), b(2) and c(10-14). The alpha and beta chains form an alternating ring which encloses part of the gamma chain. F(1) is attached to F(0) by a central stalk formed by the gamma and epsilon chains, while a peripheral stalk is formed by the delta and b chains.</text>
</comment>
<comment type="subcellular location">
    <subcellularLocation>
        <location evidence="1">Cell inner membrane</location>
        <topology evidence="1">Multi-pass membrane protein</topology>
    </subcellularLocation>
</comment>
<comment type="similarity">
    <text evidence="1">Belongs to the ATPase C chain family.</text>
</comment>
<keyword id="KW-0066">ATP synthesis</keyword>
<keyword id="KW-0997">Cell inner membrane</keyword>
<keyword id="KW-1003">Cell membrane</keyword>
<keyword id="KW-0138">CF(0)</keyword>
<keyword id="KW-0375">Hydrogen ion transport</keyword>
<keyword id="KW-0406">Ion transport</keyword>
<keyword id="KW-0446">Lipid-binding</keyword>
<keyword id="KW-0472">Membrane</keyword>
<keyword id="KW-1185">Reference proteome</keyword>
<keyword id="KW-0812">Transmembrane</keyword>
<keyword id="KW-1133">Transmembrane helix</keyword>
<keyword id="KW-0813">Transport</keyword>
<gene>
    <name evidence="1" type="primary">atpE</name>
    <name type="ordered locus">Dole_0631</name>
</gene>
<name>ATPL_DESOH</name>
<protein>
    <recommendedName>
        <fullName evidence="1">ATP synthase subunit c</fullName>
    </recommendedName>
    <alternativeName>
        <fullName evidence="1">ATP synthase F(0) sector subunit c</fullName>
    </alternativeName>
    <alternativeName>
        <fullName evidence="1">F-type ATPase subunit c</fullName>
        <shortName evidence="1">F-ATPase subunit c</shortName>
    </alternativeName>
    <alternativeName>
        <fullName evidence="1">Lipid-binding protein</fullName>
    </alternativeName>
</protein>
<reference key="1">
    <citation type="submission" date="2007-10" db="EMBL/GenBank/DDBJ databases">
        <title>Complete sequence of Desulfococcus oleovorans Hxd3.</title>
        <authorList>
            <consortium name="US DOE Joint Genome Institute"/>
            <person name="Copeland A."/>
            <person name="Lucas S."/>
            <person name="Lapidus A."/>
            <person name="Barry K."/>
            <person name="Glavina del Rio T."/>
            <person name="Dalin E."/>
            <person name="Tice H."/>
            <person name="Pitluck S."/>
            <person name="Kiss H."/>
            <person name="Brettin T."/>
            <person name="Bruce D."/>
            <person name="Detter J.C."/>
            <person name="Han C."/>
            <person name="Schmutz J."/>
            <person name="Larimer F."/>
            <person name="Land M."/>
            <person name="Hauser L."/>
            <person name="Kyrpides N."/>
            <person name="Kim E."/>
            <person name="Wawrik B."/>
            <person name="Richardson P."/>
        </authorList>
    </citation>
    <scope>NUCLEOTIDE SEQUENCE [LARGE SCALE GENOMIC DNA]</scope>
    <source>
        <strain>DSM 6200 / JCM 39069 / Hxd3</strain>
    </source>
</reference>
<sequence length="96" mass="9543">MEAEALKFFIACVTAAGFGIAIAAFGCGIGQGLGLKAAAEGVARNPEASGKITVTMLIGLAMIESLCIYALVVALILIFASPMTATVTGLLTGAGH</sequence>
<evidence type="ECO:0000255" key="1">
    <source>
        <dbReference type="HAMAP-Rule" id="MF_01396"/>
    </source>
</evidence>